<organism>
    <name type="scientific">Mycobacterium tuberculosis (strain CDC 1551 / Oshkosh)</name>
    <dbReference type="NCBI Taxonomy" id="83331"/>
    <lineage>
        <taxon>Bacteria</taxon>
        <taxon>Bacillati</taxon>
        <taxon>Actinomycetota</taxon>
        <taxon>Actinomycetes</taxon>
        <taxon>Mycobacteriales</taxon>
        <taxon>Mycobacteriaceae</taxon>
        <taxon>Mycobacterium</taxon>
        <taxon>Mycobacterium tuberculosis complex</taxon>
    </lineage>
</organism>
<feature type="chain" id="PRO_0000427359" description="Uncharacterized protein MT0111">
    <location>
        <begin position="1"/>
        <end position="661"/>
    </location>
</feature>
<feature type="transmembrane region" description="Helical" evidence="1">
    <location>
        <begin position="27"/>
        <end position="47"/>
    </location>
</feature>
<feature type="transmembrane region" description="Helical" evidence="1">
    <location>
        <begin position="68"/>
        <end position="88"/>
    </location>
</feature>
<feature type="transmembrane region" description="Helical" evidence="1">
    <location>
        <begin position="116"/>
        <end position="136"/>
    </location>
</feature>
<feature type="transmembrane region" description="Helical" evidence="1">
    <location>
        <begin position="150"/>
        <end position="170"/>
    </location>
</feature>
<feature type="transmembrane region" description="Helical" evidence="1">
    <location>
        <begin position="179"/>
        <end position="199"/>
    </location>
</feature>
<feature type="transmembrane region" description="Helical" evidence="1">
    <location>
        <begin position="214"/>
        <end position="234"/>
    </location>
</feature>
<feature type="transmembrane region" description="Helical" evidence="1">
    <location>
        <begin position="251"/>
        <end position="271"/>
    </location>
</feature>
<feature type="transmembrane region" description="Helical" evidence="1">
    <location>
        <begin position="279"/>
        <end position="299"/>
    </location>
</feature>
<feature type="transmembrane region" description="Helical" evidence="1">
    <location>
        <begin position="313"/>
        <end position="333"/>
    </location>
</feature>
<feature type="transmembrane region" description="Helical" evidence="1">
    <location>
        <begin position="369"/>
        <end position="389"/>
    </location>
</feature>
<feature type="transmembrane region" description="Helical" evidence="1">
    <location>
        <begin position="396"/>
        <end position="416"/>
    </location>
</feature>
<feature type="transmembrane region" description="Helical" evidence="1">
    <location>
        <begin position="435"/>
        <end position="455"/>
    </location>
</feature>
<feature type="transmembrane region" description="Helical" evidence="1">
    <location>
        <begin position="488"/>
        <end position="508"/>
    </location>
</feature>
<feature type="transmembrane region" description="Helical" evidence="1">
    <location>
        <begin position="519"/>
        <end position="539"/>
    </location>
</feature>
<feature type="transmembrane region" description="Helical" evidence="1">
    <location>
        <begin position="552"/>
        <end position="572"/>
    </location>
</feature>
<feature type="transmembrane region" description="Helical" evidence="1">
    <location>
        <begin position="599"/>
        <end position="619"/>
    </location>
</feature>
<sequence>MGTHGATKSATSAVPTPRSNSMAMVRLAIGLLGVCAVVAAFGLVSGARRYAEAGNPYPGAFVSVAEPVGFFAASLAGALCLGALIHVVMTAKPEPDGLIDAAAFRIHLLAERVSGLWLGLAATMVVIQAAHDTGVGPARLLASGALSDSVAASEMARGWIVAAICALVVATALRLYTRWLGHVVLLVPTVLAVVATAVTGNPGQGPDHDYATSAAIVFAVAFATLTGLKIAAALAGTTPSRAVLVTQVTCGALALAYGAMLLYLFIPGWAVDSDFARLGLLAGVILTSVWLFDCWRLLVRPPHAGRRRGGGSGAALAMMAAMASIAAMAVMTAPRFLTHAFTAWDVFLGYELPQPPTIARVLTVWRFDSLIGAAGVVLAIGYAAGFAALRRRGNSWPVGRLIAWLTGCAALVFTSGSGVRAYGSAMFSVHMAEHMTLNMFIPVLLVLGGPVTLALRVLPVTGDGRPPGAREWLTWLLHSRVTTFLSHPITAFVLFVASPYIVYFTPLFDTFVRYHWGHEFMAIHFLVVGYLFYWAIIGIDPGPRRLPYPGRIGLLFAVMPFHAFFGIALMTMSSTVGATFYRSVNLPWLSSIIADQHLGGGIAWSLTELPVIMVIVALVTQWARQDRRVASREDRHADSDYADDELEAYNAMLRELSRMRR</sequence>
<comment type="subcellular location">
    <subcellularLocation>
        <location evidence="2">Cell membrane</location>
        <topology evidence="2">Multi-pass membrane protein</topology>
    </subcellularLocation>
</comment>
<comment type="similarity">
    <text evidence="2">To M.leprae ML1998.</text>
</comment>
<reference key="1">
    <citation type="journal article" date="2002" name="J. Bacteriol.">
        <title>Whole-genome comparison of Mycobacterium tuberculosis clinical and laboratory strains.</title>
        <authorList>
            <person name="Fleischmann R.D."/>
            <person name="Alland D."/>
            <person name="Eisen J.A."/>
            <person name="Carpenter L."/>
            <person name="White O."/>
            <person name="Peterson J.D."/>
            <person name="DeBoy R.T."/>
            <person name="Dodson R.J."/>
            <person name="Gwinn M.L."/>
            <person name="Haft D.H."/>
            <person name="Hickey E.K."/>
            <person name="Kolonay J.F."/>
            <person name="Nelson W.C."/>
            <person name="Umayam L.A."/>
            <person name="Ermolaeva M.D."/>
            <person name="Salzberg S.L."/>
            <person name="Delcher A."/>
            <person name="Utterback T.R."/>
            <person name="Weidman J.F."/>
            <person name="Khouri H.M."/>
            <person name="Gill J."/>
            <person name="Mikula A."/>
            <person name="Bishai W."/>
            <person name="Jacobs W.R. Jr."/>
            <person name="Venter J.C."/>
            <person name="Fraser C.M."/>
        </authorList>
    </citation>
    <scope>NUCLEOTIDE SEQUENCE [LARGE SCALE GENOMIC DNA]</scope>
    <source>
        <strain>CDC 1551 / Oshkosh</strain>
    </source>
</reference>
<protein>
    <recommendedName>
        <fullName>Uncharacterized protein MT0111</fullName>
    </recommendedName>
</protein>
<keyword id="KW-1003">Cell membrane</keyword>
<keyword id="KW-0472">Membrane</keyword>
<keyword id="KW-1185">Reference proteome</keyword>
<keyword id="KW-0812">Transmembrane</keyword>
<keyword id="KW-1133">Transmembrane helix</keyword>
<dbReference type="EMBL" id="AE000516">
    <property type="protein sequence ID" value="AAK44333.1"/>
    <property type="molecule type" value="Genomic_DNA"/>
</dbReference>
<dbReference type="PIR" id="F70751">
    <property type="entry name" value="F70751"/>
</dbReference>
<dbReference type="RefSeq" id="WP_003900808.1">
    <property type="nucleotide sequence ID" value="NZ_KK341227.1"/>
</dbReference>
<dbReference type="KEGG" id="mtc:MT0111"/>
<dbReference type="PATRIC" id="fig|83331.31.peg.116"/>
<dbReference type="HOGENOM" id="CLU_016803_0_0_11"/>
<dbReference type="Proteomes" id="UP000001020">
    <property type="component" value="Chromosome"/>
</dbReference>
<dbReference type="GO" id="GO:0005886">
    <property type="term" value="C:plasma membrane"/>
    <property type="evidence" value="ECO:0007669"/>
    <property type="project" value="UniProtKB-SubCell"/>
</dbReference>
<dbReference type="InterPro" id="IPR019108">
    <property type="entry name" value="Caa3_assmbl_CtaG-rel"/>
</dbReference>
<dbReference type="Pfam" id="PF09678">
    <property type="entry name" value="Caa3_CtaG"/>
    <property type="match status" value="1"/>
</dbReference>
<gene>
    <name type="ordered locus">MT0111</name>
</gene>
<accession>P9WM62</accession>
<accession>L0T5I9</accession>
<accession>P64689</accession>
<accession>Q10897</accession>
<evidence type="ECO:0000255" key="1"/>
<evidence type="ECO:0000305" key="2"/>
<proteinExistence type="predicted"/>
<name>Y102_MYCTO</name>